<name>CARP5_RHINI</name>
<feature type="signal peptide" evidence="2">
    <location>
        <begin position="1"/>
        <end position="21"/>
    </location>
</feature>
<feature type="propeptide" id="PRO_0000025891" description="Activation peptide" evidence="2">
    <location>
        <begin position="22"/>
        <end position="69"/>
    </location>
</feature>
<feature type="chain" id="PRO_0000025892" description="Rhizopuspepsin-5">
    <location>
        <begin position="70"/>
        <end position="392"/>
    </location>
</feature>
<feature type="domain" description="Peptidase A1" evidence="3">
    <location>
        <begin position="85"/>
        <end position="389"/>
    </location>
</feature>
<feature type="active site" evidence="4">
    <location>
        <position position="103"/>
    </location>
</feature>
<feature type="active site" evidence="4">
    <location>
        <position position="286"/>
    </location>
</feature>
<feature type="disulfide bond" evidence="1">
    <location>
        <begin position="116"/>
        <end position="119"/>
    </location>
</feature>
<feature type="disulfide bond" evidence="1">
    <location>
        <begin position="320"/>
        <end position="353"/>
    </location>
</feature>
<proteinExistence type="inferred from homology"/>
<reference key="1">
    <citation type="submission" date="1996-08" db="EMBL/GenBank/DDBJ databases">
        <authorList>
            <person name="Horiuchi H."/>
            <person name="Nakamura H."/>
            <person name="Okazaki T."/>
            <person name="Yano K."/>
            <person name="Takagi M."/>
        </authorList>
    </citation>
    <scope>NUCLEOTIDE SEQUENCE [GENOMIC DNA]</scope>
    <source>
        <strain>NBRC 4810 / AS 3.4817</strain>
    </source>
</reference>
<keyword id="KW-0064">Aspartyl protease</keyword>
<keyword id="KW-1015">Disulfide bond</keyword>
<keyword id="KW-0378">Hydrolase</keyword>
<keyword id="KW-0645">Protease</keyword>
<keyword id="KW-0732">Signal</keyword>
<keyword id="KW-0865">Zymogen</keyword>
<sequence length="392" mass="41850">MKFSLISSCVALAVLVLSTEAAPNGKKVNIPLTKNKDYKPNAKNAIQKVLAKYHRHRSTSSSSNSTSTDGIGRVPVTDYYNDIEYFGQVKVGTPGVTLKLDFDTGSSDLWFASSLCTNCGYSQTKYNPNQSRTYAKDGRAWSISYGDGSSASGILGTDTVVLGGLTIQRQTIELARREASSFQNGPSDGLLGLGFNSITTVRGVKTPVDNLISQGLISNPVFGVYLGKESNGGGGEYIFGGYDSSKFKGSLTTIPVDNSNGWYGVTIRGASIGRSRVAGSFEAILDTGTSLLVLPNDVARSVASAYGARDNYDGTFSISCDTSRFQPLVFTIGSSTFEVPADSLVYEQNGYSCIAGFGYGDYDFAIFDDVFLKNNYVVFNPTVPQVQIATVA</sequence>
<accession>P43232</accession>
<organism>
    <name type="scientific">Rhizopus niveus</name>
    <dbReference type="NCBI Taxonomy" id="4844"/>
    <lineage>
        <taxon>Eukaryota</taxon>
        <taxon>Fungi</taxon>
        <taxon>Fungi incertae sedis</taxon>
        <taxon>Mucoromycota</taxon>
        <taxon>Mucoromycotina</taxon>
        <taxon>Mucoromycetes</taxon>
        <taxon>Mucorales</taxon>
        <taxon>Mucorineae</taxon>
        <taxon>Rhizopodaceae</taxon>
        <taxon>Rhizopus</taxon>
    </lineage>
</organism>
<dbReference type="EC" id="3.4.23.21"/>
<dbReference type="EMBL" id="X56993">
    <property type="protein sequence ID" value="CAA40310.1"/>
    <property type="molecule type" value="Genomic_DNA"/>
</dbReference>
<dbReference type="SMR" id="P43232"/>
<dbReference type="MEROPS" id="A01.012"/>
<dbReference type="GO" id="GO:0004190">
    <property type="term" value="F:aspartic-type endopeptidase activity"/>
    <property type="evidence" value="ECO:0007669"/>
    <property type="project" value="UniProtKB-KW"/>
</dbReference>
<dbReference type="GO" id="GO:0006508">
    <property type="term" value="P:proteolysis"/>
    <property type="evidence" value="ECO:0007669"/>
    <property type="project" value="UniProtKB-KW"/>
</dbReference>
<dbReference type="FunFam" id="2.40.70.10:FF:000115">
    <property type="entry name" value="Lysosomal aspartic protease"/>
    <property type="match status" value="1"/>
</dbReference>
<dbReference type="Gene3D" id="2.40.70.10">
    <property type="entry name" value="Acid Proteases"/>
    <property type="match status" value="2"/>
</dbReference>
<dbReference type="InterPro" id="IPR001461">
    <property type="entry name" value="Aspartic_peptidase_A1"/>
</dbReference>
<dbReference type="InterPro" id="IPR001969">
    <property type="entry name" value="Aspartic_peptidase_AS"/>
</dbReference>
<dbReference type="InterPro" id="IPR033121">
    <property type="entry name" value="PEPTIDASE_A1"/>
</dbReference>
<dbReference type="InterPro" id="IPR021109">
    <property type="entry name" value="Peptidase_aspartic_dom_sf"/>
</dbReference>
<dbReference type="PANTHER" id="PTHR47966:SF1">
    <property type="entry name" value="ASPARTYL PROTEINASE"/>
    <property type="match status" value="1"/>
</dbReference>
<dbReference type="PANTHER" id="PTHR47966">
    <property type="entry name" value="BETA-SITE APP-CLEAVING ENZYME, ISOFORM A-RELATED"/>
    <property type="match status" value="1"/>
</dbReference>
<dbReference type="Pfam" id="PF00026">
    <property type="entry name" value="Asp"/>
    <property type="match status" value="1"/>
</dbReference>
<dbReference type="PRINTS" id="PR00792">
    <property type="entry name" value="PEPSIN"/>
</dbReference>
<dbReference type="SUPFAM" id="SSF50630">
    <property type="entry name" value="Acid proteases"/>
    <property type="match status" value="1"/>
</dbReference>
<dbReference type="PROSITE" id="PS00141">
    <property type="entry name" value="ASP_PROTEASE"/>
    <property type="match status" value="2"/>
</dbReference>
<dbReference type="PROSITE" id="PS51767">
    <property type="entry name" value="PEPTIDASE_A1"/>
    <property type="match status" value="1"/>
</dbReference>
<protein>
    <recommendedName>
        <fullName>Rhizopuspepsin-5</fullName>
        <ecNumber>3.4.23.21</ecNumber>
    </recommendedName>
    <alternativeName>
        <fullName>Aspartate protease</fullName>
    </alternativeName>
</protein>
<evidence type="ECO:0000250" key="1"/>
<evidence type="ECO:0000255" key="2"/>
<evidence type="ECO:0000255" key="3">
    <source>
        <dbReference type="PROSITE-ProRule" id="PRU01103"/>
    </source>
</evidence>
<evidence type="ECO:0000255" key="4">
    <source>
        <dbReference type="PROSITE-ProRule" id="PRU10094"/>
    </source>
</evidence>
<evidence type="ECO:0000305" key="5"/>
<comment type="catalytic activity">
    <reaction>
        <text>Hydrolysis of proteins with broad specificity similar to that of pepsin A, preferring hydrophobic residues at P1 and P1'. Clots milk and activates trypsinogen. Does not cleave 4-Gln-|-His-5, but does cleave 10-His-|-Leu-11 and 12-Val-|-Glu-13 in B chain of insulin.</text>
        <dbReference type="EC" id="3.4.23.21"/>
    </reaction>
</comment>
<comment type="similarity">
    <text evidence="5">Belongs to the peptidase A1 family.</text>
</comment>